<comment type="function">
    <text evidence="1">Essential cell division protein. May link together the upstream cell division proteins, which are predominantly cytoplasmic, with the downstream cell division proteins, which are predominantly periplasmic.</text>
</comment>
<comment type="subunit">
    <text evidence="1">Part of a complex composed of FtsB, FtsL and FtsQ.</text>
</comment>
<comment type="subcellular location">
    <subcellularLocation>
        <location evidence="1">Cell inner membrane</location>
        <topology evidence="1">Single-pass type II membrane protein</topology>
    </subcellularLocation>
    <text evidence="1">Localizes to the division septum.</text>
</comment>
<comment type="similarity">
    <text evidence="1">Belongs to the FtsB family.</text>
</comment>
<organism>
    <name type="scientific">Neisseria meningitidis serogroup B (strain ATCC BAA-335 / MC58)</name>
    <dbReference type="NCBI Taxonomy" id="122586"/>
    <lineage>
        <taxon>Bacteria</taxon>
        <taxon>Pseudomonadati</taxon>
        <taxon>Pseudomonadota</taxon>
        <taxon>Betaproteobacteria</taxon>
        <taxon>Neisseriales</taxon>
        <taxon>Neisseriaceae</taxon>
        <taxon>Neisseria</taxon>
    </lineage>
</organism>
<keyword id="KW-0131">Cell cycle</keyword>
<keyword id="KW-0132">Cell division</keyword>
<keyword id="KW-0997">Cell inner membrane</keyword>
<keyword id="KW-1003">Cell membrane</keyword>
<keyword id="KW-0175">Coiled coil</keyword>
<keyword id="KW-0472">Membrane</keyword>
<keyword id="KW-1185">Reference proteome</keyword>
<keyword id="KW-0812">Transmembrane</keyword>
<keyword id="KW-1133">Transmembrane helix</keyword>
<proteinExistence type="inferred from homology"/>
<name>FTSB_NEIMB</name>
<protein>
    <recommendedName>
        <fullName evidence="1">Cell division protein FtsB</fullName>
    </recommendedName>
</protein>
<sequence length="92" mass="10563">MKWVTVVLSFALVCCQYSLWFGKGSIGRNSSLREQIAVQEEKNQTLALRNHSLAAEVYDLENGQEAISEIARVELGYIQDGETFYRLIRHNR</sequence>
<evidence type="ECO:0000255" key="1">
    <source>
        <dbReference type="HAMAP-Rule" id="MF_00599"/>
    </source>
</evidence>
<gene>
    <name evidence="1" type="primary">ftsB</name>
    <name type="ordered locus">NMB1286</name>
</gene>
<reference key="1">
    <citation type="journal article" date="2000" name="Science">
        <title>Complete genome sequence of Neisseria meningitidis serogroup B strain MC58.</title>
        <authorList>
            <person name="Tettelin H."/>
            <person name="Saunders N.J."/>
            <person name="Heidelberg J.F."/>
            <person name="Jeffries A.C."/>
            <person name="Nelson K.E."/>
            <person name="Eisen J.A."/>
            <person name="Ketchum K.A."/>
            <person name="Hood D.W."/>
            <person name="Peden J.F."/>
            <person name="Dodson R.J."/>
            <person name="Nelson W.C."/>
            <person name="Gwinn M.L."/>
            <person name="DeBoy R.T."/>
            <person name="Peterson J.D."/>
            <person name="Hickey E.K."/>
            <person name="Haft D.H."/>
            <person name="Salzberg S.L."/>
            <person name="White O."/>
            <person name="Fleischmann R.D."/>
            <person name="Dougherty B.A."/>
            <person name="Mason T.M."/>
            <person name="Ciecko A."/>
            <person name="Parksey D.S."/>
            <person name="Blair E."/>
            <person name="Cittone H."/>
            <person name="Clark E.B."/>
            <person name="Cotton M.D."/>
            <person name="Utterback T.R."/>
            <person name="Khouri H.M."/>
            <person name="Qin H."/>
            <person name="Vamathevan J.J."/>
            <person name="Gill J."/>
            <person name="Scarlato V."/>
            <person name="Masignani V."/>
            <person name="Pizza M."/>
            <person name="Grandi G."/>
            <person name="Sun L."/>
            <person name="Smith H.O."/>
            <person name="Fraser C.M."/>
            <person name="Moxon E.R."/>
            <person name="Rappuoli R."/>
            <person name="Venter J.C."/>
        </authorList>
    </citation>
    <scope>NUCLEOTIDE SEQUENCE [LARGE SCALE GENOMIC DNA]</scope>
    <source>
        <strain>ATCC BAA-335 / MC58</strain>
    </source>
</reference>
<accession>P64161</accession>
<accession>Q9JR95</accession>
<feature type="chain" id="PRO_0000214450" description="Cell division protein FtsB">
    <location>
        <begin position="1"/>
        <end position="92"/>
    </location>
</feature>
<feature type="topological domain" description="Cytoplasmic" evidence="1">
    <location>
        <begin position="1"/>
        <end position="3"/>
    </location>
</feature>
<feature type="transmembrane region" description="Helical" evidence="1">
    <location>
        <begin position="4"/>
        <end position="21"/>
    </location>
</feature>
<feature type="topological domain" description="Periplasmic" evidence="1">
    <location>
        <begin position="22"/>
        <end position="92"/>
    </location>
</feature>
<feature type="coiled-coil region" evidence="1">
    <location>
        <begin position="28"/>
        <end position="50"/>
    </location>
</feature>
<dbReference type="EMBL" id="AE002098">
    <property type="protein sequence ID" value="AAF41662.1"/>
    <property type="molecule type" value="Genomic_DNA"/>
</dbReference>
<dbReference type="PIR" id="E81100">
    <property type="entry name" value="E81100"/>
</dbReference>
<dbReference type="RefSeq" id="NP_274306.1">
    <property type="nucleotide sequence ID" value="NC_003112.2"/>
</dbReference>
<dbReference type="RefSeq" id="WP_002213385.1">
    <property type="nucleotide sequence ID" value="NC_003112.2"/>
</dbReference>
<dbReference type="SMR" id="P64161"/>
<dbReference type="FunCoup" id="P64161">
    <property type="interactions" value="49"/>
</dbReference>
<dbReference type="STRING" id="122586.NMB1286"/>
<dbReference type="PaxDb" id="122586-NMB1286"/>
<dbReference type="GeneID" id="93385912"/>
<dbReference type="KEGG" id="nme:NMB1286"/>
<dbReference type="PATRIC" id="fig|122586.8.peg.1611"/>
<dbReference type="HOGENOM" id="CLU_134863_5_2_4"/>
<dbReference type="InParanoid" id="P64161"/>
<dbReference type="OrthoDB" id="7061211at2"/>
<dbReference type="Proteomes" id="UP000000425">
    <property type="component" value="Chromosome"/>
</dbReference>
<dbReference type="GO" id="GO:0032153">
    <property type="term" value="C:cell division site"/>
    <property type="evidence" value="ECO:0007669"/>
    <property type="project" value="UniProtKB-UniRule"/>
</dbReference>
<dbReference type="GO" id="GO:0030428">
    <property type="term" value="C:cell septum"/>
    <property type="evidence" value="ECO:0000318"/>
    <property type="project" value="GO_Central"/>
</dbReference>
<dbReference type="GO" id="GO:0005886">
    <property type="term" value="C:plasma membrane"/>
    <property type="evidence" value="ECO:0007669"/>
    <property type="project" value="UniProtKB-SubCell"/>
</dbReference>
<dbReference type="GO" id="GO:0043093">
    <property type="term" value="P:FtsZ-dependent cytokinesis"/>
    <property type="evidence" value="ECO:0000318"/>
    <property type="project" value="GO_Central"/>
</dbReference>
<dbReference type="HAMAP" id="MF_00599">
    <property type="entry name" value="FtsB"/>
    <property type="match status" value="1"/>
</dbReference>
<dbReference type="InterPro" id="IPR023081">
    <property type="entry name" value="Cell_div_FtsB"/>
</dbReference>
<dbReference type="InterPro" id="IPR007060">
    <property type="entry name" value="FtsL/DivIC"/>
</dbReference>
<dbReference type="NCBIfam" id="NF002058">
    <property type="entry name" value="PRK00888.1"/>
    <property type="match status" value="1"/>
</dbReference>
<dbReference type="PANTHER" id="PTHR37485">
    <property type="entry name" value="CELL DIVISION PROTEIN FTSB"/>
    <property type="match status" value="1"/>
</dbReference>
<dbReference type="PANTHER" id="PTHR37485:SF1">
    <property type="entry name" value="CELL DIVISION PROTEIN FTSB"/>
    <property type="match status" value="1"/>
</dbReference>
<dbReference type="Pfam" id="PF04977">
    <property type="entry name" value="DivIC"/>
    <property type="match status" value="1"/>
</dbReference>